<gene>
    <name evidence="1" type="primary">ctaG</name>
    <name type="ordered locus">BRADO6703</name>
</gene>
<proteinExistence type="inferred from homology"/>
<sequence>MDATDQGKSTSTTAAQAAPGKAAPRRGIGRDALVGGICGAVVVLMIGASYAAVPFYNWFCRATGFNGTTQVATAAPSAAPLARRIGVRFDANVAGGLPWKFEPEKTEIEVAIGEVVTVYYTVTNQSARTTMAQAAYNVTPLTSGAYFQKINCFCFTEQTMAPGETREMPVVFYVDPAITADHENDGLNTITLSYTFYPVRDAAPKPVAAGEPDKPRGSL</sequence>
<reference key="1">
    <citation type="journal article" date="2007" name="Science">
        <title>Legumes symbioses: absence of nod genes in photosynthetic bradyrhizobia.</title>
        <authorList>
            <person name="Giraud E."/>
            <person name="Moulin L."/>
            <person name="Vallenet D."/>
            <person name="Barbe V."/>
            <person name="Cytryn E."/>
            <person name="Avarre J.-C."/>
            <person name="Jaubert M."/>
            <person name="Simon D."/>
            <person name="Cartieaux F."/>
            <person name="Prin Y."/>
            <person name="Bena G."/>
            <person name="Hannibal L."/>
            <person name="Fardoux J."/>
            <person name="Kojadinovic M."/>
            <person name="Vuillet L."/>
            <person name="Lajus A."/>
            <person name="Cruveiller S."/>
            <person name="Rouy Z."/>
            <person name="Mangenot S."/>
            <person name="Segurens B."/>
            <person name="Dossat C."/>
            <person name="Franck W.L."/>
            <person name="Chang W.-S."/>
            <person name="Saunders E."/>
            <person name="Bruce D."/>
            <person name="Richardson P."/>
            <person name="Normand P."/>
            <person name="Dreyfus B."/>
            <person name="Pignol D."/>
            <person name="Stacey G."/>
            <person name="Emerich D."/>
            <person name="Vermeglio A."/>
            <person name="Medigue C."/>
            <person name="Sadowsky M."/>
        </authorList>
    </citation>
    <scope>NUCLEOTIDE SEQUENCE [LARGE SCALE GENOMIC DNA]</scope>
    <source>
        <strain>ORS 278</strain>
    </source>
</reference>
<feature type="chain" id="PRO_0000311198" description="Cytochrome c oxidase assembly protein CtaG">
    <location>
        <begin position="1"/>
        <end position="219"/>
    </location>
</feature>
<feature type="topological domain" description="Cytoplasmic" evidence="1">
    <location>
        <begin position="1"/>
        <end position="29"/>
    </location>
</feature>
<feature type="transmembrane region" description="Helical; Signal-anchor for type II membrane protein" evidence="1">
    <location>
        <begin position="30"/>
        <end position="52"/>
    </location>
</feature>
<feature type="topological domain" description="Periplasmic" evidence="1">
    <location>
        <begin position="53"/>
        <end position="219"/>
    </location>
</feature>
<feature type="region of interest" description="Disordered" evidence="2">
    <location>
        <begin position="1"/>
        <end position="24"/>
    </location>
</feature>
<feature type="compositionally biased region" description="Polar residues" evidence="2">
    <location>
        <begin position="1"/>
        <end position="13"/>
    </location>
</feature>
<feature type="compositionally biased region" description="Low complexity" evidence="2">
    <location>
        <begin position="14"/>
        <end position="24"/>
    </location>
</feature>
<evidence type="ECO:0000255" key="1">
    <source>
        <dbReference type="HAMAP-Rule" id="MF_00155"/>
    </source>
</evidence>
<evidence type="ECO:0000256" key="2">
    <source>
        <dbReference type="SAM" id="MobiDB-lite"/>
    </source>
</evidence>
<name>COXZ_BRASO</name>
<keyword id="KW-0997">Cell inner membrane</keyword>
<keyword id="KW-1003">Cell membrane</keyword>
<keyword id="KW-0186">Copper</keyword>
<keyword id="KW-0472">Membrane</keyword>
<keyword id="KW-1185">Reference proteome</keyword>
<keyword id="KW-0735">Signal-anchor</keyword>
<keyword id="KW-0812">Transmembrane</keyword>
<keyword id="KW-1133">Transmembrane helix</keyword>
<dbReference type="EMBL" id="CU234118">
    <property type="protein sequence ID" value="CAL80306.1"/>
    <property type="molecule type" value="Genomic_DNA"/>
</dbReference>
<dbReference type="RefSeq" id="WP_012030174.1">
    <property type="nucleotide sequence ID" value="NC_009445.1"/>
</dbReference>
<dbReference type="SMR" id="A4Z2D0"/>
<dbReference type="STRING" id="114615.BRADO6703"/>
<dbReference type="KEGG" id="bra:BRADO6703"/>
<dbReference type="eggNOG" id="COG3175">
    <property type="taxonomic scope" value="Bacteria"/>
</dbReference>
<dbReference type="HOGENOM" id="CLU_045000_5_0_5"/>
<dbReference type="OrthoDB" id="9804841at2"/>
<dbReference type="Proteomes" id="UP000001994">
    <property type="component" value="Chromosome"/>
</dbReference>
<dbReference type="GO" id="GO:0005886">
    <property type="term" value="C:plasma membrane"/>
    <property type="evidence" value="ECO:0007669"/>
    <property type="project" value="UniProtKB-SubCell"/>
</dbReference>
<dbReference type="GO" id="GO:0005507">
    <property type="term" value="F:copper ion binding"/>
    <property type="evidence" value="ECO:0007669"/>
    <property type="project" value="InterPro"/>
</dbReference>
<dbReference type="GO" id="GO:0008535">
    <property type="term" value="P:respiratory chain complex IV assembly"/>
    <property type="evidence" value="ECO:0007669"/>
    <property type="project" value="UniProtKB-UniRule"/>
</dbReference>
<dbReference type="FunFam" id="2.60.370.10:FF:000001">
    <property type="entry name" value="COX11 cytochrome c oxidase assembly homolog"/>
    <property type="match status" value="1"/>
</dbReference>
<dbReference type="Gene3D" id="2.60.370.10">
    <property type="entry name" value="Ctag/Cox11"/>
    <property type="match status" value="1"/>
</dbReference>
<dbReference type="HAMAP" id="MF_00155">
    <property type="entry name" value="CtaG"/>
    <property type="match status" value="1"/>
</dbReference>
<dbReference type="InterPro" id="IPR023471">
    <property type="entry name" value="CtaG/Cox11_dom_sf"/>
</dbReference>
<dbReference type="InterPro" id="IPR007533">
    <property type="entry name" value="Cyt_c_oxidase_assmbl_CtaG"/>
</dbReference>
<dbReference type="NCBIfam" id="NF003465">
    <property type="entry name" value="PRK05089.1"/>
    <property type="match status" value="1"/>
</dbReference>
<dbReference type="PANTHER" id="PTHR21320:SF3">
    <property type="entry name" value="CYTOCHROME C OXIDASE ASSEMBLY PROTEIN COX11, MITOCHONDRIAL-RELATED"/>
    <property type="match status" value="1"/>
</dbReference>
<dbReference type="PANTHER" id="PTHR21320">
    <property type="entry name" value="CYTOCHROME C OXIDASE ASSEMBLY PROTEIN COX11-RELATED"/>
    <property type="match status" value="1"/>
</dbReference>
<dbReference type="Pfam" id="PF04442">
    <property type="entry name" value="CtaG_Cox11"/>
    <property type="match status" value="1"/>
</dbReference>
<dbReference type="SUPFAM" id="SSF110111">
    <property type="entry name" value="Ctag/Cox11"/>
    <property type="match status" value="1"/>
</dbReference>
<comment type="function">
    <text evidence="1">Exerts its effect at some terminal stage of cytochrome c oxidase synthesis, probably by being involved in the insertion of the copper B into subunit I.</text>
</comment>
<comment type="subcellular location">
    <subcellularLocation>
        <location evidence="1">Cell inner membrane</location>
        <topology evidence="1">Single-pass type II membrane protein</topology>
        <orientation evidence="1">Periplasmic side</orientation>
    </subcellularLocation>
</comment>
<comment type="similarity">
    <text evidence="1">Belongs to the COX11/CtaG family.</text>
</comment>
<accession>A4Z2D0</accession>
<protein>
    <recommendedName>
        <fullName evidence="1">Cytochrome c oxidase assembly protein CtaG</fullName>
    </recommendedName>
</protein>
<organism>
    <name type="scientific">Bradyrhizobium sp. (strain ORS 278)</name>
    <dbReference type="NCBI Taxonomy" id="114615"/>
    <lineage>
        <taxon>Bacteria</taxon>
        <taxon>Pseudomonadati</taxon>
        <taxon>Pseudomonadota</taxon>
        <taxon>Alphaproteobacteria</taxon>
        <taxon>Hyphomicrobiales</taxon>
        <taxon>Nitrobacteraceae</taxon>
        <taxon>Bradyrhizobium</taxon>
    </lineage>
</organism>